<feature type="chain" id="PRO_0000057380" description="tRNA pseudouridine synthase A">
    <location>
        <begin position="1"/>
        <end position="283"/>
    </location>
</feature>
<feature type="region of interest" description="RNA binding" evidence="1">
    <location>
        <begin position="120"/>
        <end position="124"/>
    </location>
</feature>
<feature type="region of interest" description="Interaction with tRNA" evidence="1">
    <location>
        <begin position="181"/>
        <end position="185"/>
    </location>
</feature>
<feature type="active site" description="Nucleophile" evidence="1">
    <location>
        <position position="73"/>
    </location>
</feature>
<feature type="binding site" evidence="1">
    <location>
        <position position="131"/>
    </location>
    <ligand>
        <name>substrate</name>
    </ligand>
</feature>
<feature type="site" description="Interaction with tRNA; Important for base-flipping" evidence="1">
    <location>
        <position position="71"/>
    </location>
</feature>
<feature type="site" description="Interaction with tRNA" evidence="1">
    <location>
        <position position="91"/>
    </location>
</feature>
<feature type="site" description="Interaction with tRNA" evidence="1">
    <location>
        <position position="123"/>
    </location>
</feature>
<feature type="site" description="Interaction with tRNA" evidence="1">
    <location>
        <position position="139"/>
    </location>
</feature>
<feature type="site" description="Interaction with tRNA" evidence="1">
    <location>
        <position position="152"/>
    </location>
</feature>
<evidence type="ECO:0000255" key="1">
    <source>
        <dbReference type="HAMAP-Rule" id="MF_00171"/>
    </source>
</evidence>
<protein>
    <recommendedName>
        <fullName evidence="1">tRNA pseudouridine synthase A</fullName>
        <ecNumber evidence="1">5.4.99.12</ecNumber>
    </recommendedName>
    <alternativeName>
        <fullName evidence="1">tRNA pseudouridine(38-40) synthase</fullName>
    </alternativeName>
    <alternativeName>
        <fullName evidence="1">tRNA pseudouridylate synthase I</fullName>
    </alternativeName>
    <alternativeName>
        <fullName evidence="1">tRNA-uridine isomerase I</fullName>
    </alternativeName>
</protein>
<sequence length="283" mass="31457">MSETTQAAAIQAAAVAENERAPLKIALGIEYDGSQYYGWQRQIDVASVQACLEKALSKVADEPIEVLCAGRTDAGVHGTGQVVHFTTQAIRKDAAWTMGVNANLPPDIAVRWVKAVHEDFHARFSATARRYRYIIYNHRYRPAVLSHGMTHFYHPLDVERMERAGQCLLGENDFTSFRAVQCQSRTPWRNVNHLKVTRHGNYIVVDIKANAFVHHMVRNIVGSLMDVGCGNRPESWIAELLAAKDRTLAGATARAEGLYLVAVDYPARFALPQPTMGPLFLAD</sequence>
<organism>
    <name type="scientific">Pectobacterium atrosepticum (strain SCRI 1043 / ATCC BAA-672)</name>
    <name type="common">Erwinia carotovora subsp. atroseptica</name>
    <dbReference type="NCBI Taxonomy" id="218491"/>
    <lineage>
        <taxon>Bacteria</taxon>
        <taxon>Pseudomonadati</taxon>
        <taxon>Pseudomonadota</taxon>
        <taxon>Gammaproteobacteria</taxon>
        <taxon>Enterobacterales</taxon>
        <taxon>Pectobacteriaceae</taxon>
        <taxon>Pectobacterium</taxon>
    </lineage>
</organism>
<name>TRUA_PECAS</name>
<keyword id="KW-0413">Isomerase</keyword>
<keyword id="KW-1185">Reference proteome</keyword>
<keyword id="KW-0819">tRNA processing</keyword>
<accession>Q6D2N7</accession>
<dbReference type="EC" id="5.4.99.12" evidence="1"/>
<dbReference type="EMBL" id="BX950851">
    <property type="protein sequence ID" value="CAG75957.1"/>
    <property type="molecule type" value="Genomic_DNA"/>
</dbReference>
<dbReference type="SMR" id="Q6D2N7"/>
<dbReference type="STRING" id="218491.ECA3058"/>
<dbReference type="KEGG" id="eca:ECA3058"/>
<dbReference type="eggNOG" id="COG0101">
    <property type="taxonomic scope" value="Bacteria"/>
</dbReference>
<dbReference type="HOGENOM" id="CLU_014673_0_2_6"/>
<dbReference type="OrthoDB" id="9811823at2"/>
<dbReference type="Proteomes" id="UP000007966">
    <property type="component" value="Chromosome"/>
</dbReference>
<dbReference type="GO" id="GO:0003723">
    <property type="term" value="F:RNA binding"/>
    <property type="evidence" value="ECO:0007669"/>
    <property type="project" value="InterPro"/>
</dbReference>
<dbReference type="GO" id="GO:0160147">
    <property type="term" value="F:tRNA pseudouridine(38-40) synthase activity"/>
    <property type="evidence" value="ECO:0007669"/>
    <property type="project" value="UniProtKB-EC"/>
</dbReference>
<dbReference type="GO" id="GO:0031119">
    <property type="term" value="P:tRNA pseudouridine synthesis"/>
    <property type="evidence" value="ECO:0007669"/>
    <property type="project" value="UniProtKB-UniRule"/>
</dbReference>
<dbReference type="CDD" id="cd02570">
    <property type="entry name" value="PseudoU_synth_EcTruA"/>
    <property type="match status" value="1"/>
</dbReference>
<dbReference type="FunFam" id="3.30.70.580:FF:000001">
    <property type="entry name" value="tRNA pseudouridine synthase A"/>
    <property type="match status" value="1"/>
</dbReference>
<dbReference type="FunFam" id="3.30.70.660:FF:000001">
    <property type="entry name" value="tRNA pseudouridine synthase A"/>
    <property type="match status" value="1"/>
</dbReference>
<dbReference type="Gene3D" id="3.30.70.660">
    <property type="entry name" value="Pseudouridine synthase I, catalytic domain, C-terminal subdomain"/>
    <property type="match status" value="1"/>
</dbReference>
<dbReference type="Gene3D" id="3.30.70.580">
    <property type="entry name" value="Pseudouridine synthase I, catalytic domain, N-terminal subdomain"/>
    <property type="match status" value="1"/>
</dbReference>
<dbReference type="HAMAP" id="MF_00171">
    <property type="entry name" value="TruA"/>
    <property type="match status" value="1"/>
</dbReference>
<dbReference type="InterPro" id="IPR020103">
    <property type="entry name" value="PsdUridine_synth_cat_dom_sf"/>
</dbReference>
<dbReference type="InterPro" id="IPR001406">
    <property type="entry name" value="PsdUridine_synth_TruA"/>
</dbReference>
<dbReference type="InterPro" id="IPR020097">
    <property type="entry name" value="PsdUridine_synth_TruA_a/b_dom"/>
</dbReference>
<dbReference type="InterPro" id="IPR020095">
    <property type="entry name" value="PsdUridine_synth_TruA_C"/>
</dbReference>
<dbReference type="InterPro" id="IPR020094">
    <property type="entry name" value="TruA/RsuA/RluB/E/F_N"/>
</dbReference>
<dbReference type="NCBIfam" id="TIGR00071">
    <property type="entry name" value="hisT_truA"/>
    <property type="match status" value="1"/>
</dbReference>
<dbReference type="PANTHER" id="PTHR11142">
    <property type="entry name" value="PSEUDOURIDYLATE SYNTHASE"/>
    <property type="match status" value="1"/>
</dbReference>
<dbReference type="PANTHER" id="PTHR11142:SF0">
    <property type="entry name" value="TRNA PSEUDOURIDINE SYNTHASE-LIKE 1"/>
    <property type="match status" value="1"/>
</dbReference>
<dbReference type="Pfam" id="PF01416">
    <property type="entry name" value="PseudoU_synth_1"/>
    <property type="match status" value="2"/>
</dbReference>
<dbReference type="PIRSF" id="PIRSF001430">
    <property type="entry name" value="tRNA_psdUrid_synth"/>
    <property type="match status" value="1"/>
</dbReference>
<dbReference type="SUPFAM" id="SSF55120">
    <property type="entry name" value="Pseudouridine synthase"/>
    <property type="match status" value="1"/>
</dbReference>
<gene>
    <name evidence="1" type="primary">truA</name>
    <name type="ordered locus">ECA3058</name>
</gene>
<reference key="1">
    <citation type="journal article" date="2004" name="Proc. Natl. Acad. Sci. U.S.A.">
        <title>Genome sequence of the enterobacterial phytopathogen Erwinia carotovora subsp. atroseptica and characterization of virulence factors.</title>
        <authorList>
            <person name="Bell K.S."/>
            <person name="Sebaihia M."/>
            <person name="Pritchard L."/>
            <person name="Holden M.T.G."/>
            <person name="Hyman L.J."/>
            <person name="Holeva M.C."/>
            <person name="Thomson N.R."/>
            <person name="Bentley S.D."/>
            <person name="Churcher L.J.C."/>
            <person name="Mungall K."/>
            <person name="Atkin R."/>
            <person name="Bason N."/>
            <person name="Brooks K."/>
            <person name="Chillingworth T."/>
            <person name="Clark K."/>
            <person name="Doggett J."/>
            <person name="Fraser A."/>
            <person name="Hance Z."/>
            <person name="Hauser H."/>
            <person name="Jagels K."/>
            <person name="Moule S."/>
            <person name="Norbertczak H."/>
            <person name="Ormond D."/>
            <person name="Price C."/>
            <person name="Quail M.A."/>
            <person name="Sanders M."/>
            <person name="Walker D."/>
            <person name="Whitehead S."/>
            <person name="Salmond G.P.C."/>
            <person name="Birch P.R.J."/>
            <person name="Parkhill J."/>
            <person name="Toth I.K."/>
        </authorList>
    </citation>
    <scope>NUCLEOTIDE SEQUENCE [LARGE SCALE GENOMIC DNA]</scope>
    <source>
        <strain>SCRI 1043 / ATCC BAA-672</strain>
    </source>
</reference>
<proteinExistence type="inferred from homology"/>
<comment type="function">
    <text evidence="1">Formation of pseudouridine at positions 38, 39 and 40 in the anticodon stem and loop of transfer RNAs.</text>
</comment>
<comment type="catalytic activity">
    <reaction evidence="1">
        <text>uridine(38/39/40) in tRNA = pseudouridine(38/39/40) in tRNA</text>
        <dbReference type="Rhea" id="RHEA:22376"/>
        <dbReference type="Rhea" id="RHEA-COMP:10085"/>
        <dbReference type="Rhea" id="RHEA-COMP:10087"/>
        <dbReference type="ChEBI" id="CHEBI:65314"/>
        <dbReference type="ChEBI" id="CHEBI:65315"/>
        <dbReference type="EC" id="5.4.99.12"/>
    </reaction>
</comment>
<comment type="subunit">
    <text evidence="1">Homodimer.</text>
</comment>
<comment type="similarity">
    <text evidence="1">Belongs to the tRNA pseudouridine synthase TruA family.</text>
</comment>